<organism>
    <name type="scientific">Conus pennaceus</name>
    <name type="common">Feathered cone</name>
    <name type="synonym">Conus episcopus</name>
    <dbReference type="NCBI Taxonomy" id="37335"/>
    <lineage>
        <taxon>Eukaryota</taxon>
        <taxon>Metazoa</taxon>
        <taxon>Spiralia</taxon>
        <taxon>Lophotrochozoa</taxon>
        <taxon>Mollusca</taxon>
        <taxon>Gastropoda</taxon>
        <taxon>Caenogastropoda</taxon>
        <taxon>Neogastropoda</taxon>
        <taxon>Conoidea</taxon>
        <taxon>Conidae</taxon>
        <taxon>Conus</taxon>
        <taxon>Darioconus</taxon>
    </lineage>
</organism>
<name>CT5_CONPE</name>
<accession>Q9BPF8</accession>
<keyword id="KW-0027">Amidation</keyword>
<keyword id="KW-1015">Disulfide bond</keyword>
<keyword id="KW-0528">Neurotoxin</keyword>
<keyword id="KW-0964">Secreted</keyword>
<keyword id="KW-0732">Signal</keyword>
<keyword id="KW-0800">Toxin</keyword>
<protein>
    <recommendedName>
        <fullName>Conotoxin PnMRCL-0111</fullName>
    </recommendedName>
    <alternativeName>
        <fullName evidence="5">Conotoxin PnMRCL-0112</fullName>
    </alternativeName>
</protein>
<feature type="signal peptide" evidence="2">
    <location>
        <begin position="1"/>
        <end position="22"/>
    </location>
</feature>
<feature type="propeptide" id="PRO_0000404977" evidence="1">
    <location>
        <begin position="23"/>
        <end position="50"/>
    </location>
</feature>
<feature type="peptide" id="PRO_0000404978" description="Conotoxin PnMRCL-0111">
    <location>
        <begin position="51"/>
        <end position="62"/>
    </location>
</feature>
<feature type="modified residue" description="Tryptophan amide" evidence="1">
    <location>
        <position position="62"/>
    </location>
</feature>
<sequence length="63" mass="6878">MHCLSVFVILLLLTASAPSVDAQPKTEDDVPLSSFHDDLQRTVRTLLDIRMCCLGTSGCCPWG</sequence>
<comment type="subcellular location">
    <subcellularLocation>
        <location evidence="4">Secreted</location>
    </subcellularLocation>
</comment>
<comment type="tissue specificity">
    <text evidence="4">Expressed by the venom duct.</text>
</comment>
<comment type="domain">
    <text evidence="3">The cysteine framework is V (CC-CC).</text>
</comment>
<comment type="PTM">
    <text evidence="3">Contains 2 disulfide bonds that can be either 'C1-C3, C2-C4' or 'C1-C4, C2-C3', since these disulfide connectivities have been observed for conotoxins with cysteine framework V (for examples, see AC P0DQQ7 and AC P81755).</text>
</comment>
<comment type="similarity">
    <text evidence="3">Belongs to the conotoxin T superfamily.</text>
</comment>
<dbReference type="EMBL" id="AF214971">
    <property type="protein sequence ID" value="AAG60399.1"/>
    <property type="molecule type" value="mRNA"/>
</dbReference>
<dbReference type="ConoServer" id="658">
    <property type="toxin name" value="Pn-0111 precursor"/>
</dbReference>
<dbReference type="GO" id="GO:0005576">
    <property type="term" value="C:extracellular region"/>
    <property type="evidence" value="ECO:0007669"/>
    <property type="project" value="UniProtKB-SubCell"/>
</dbReference>
<dbReference type="GO" id="GO:0090729">
    <property type="term" value="F:toxin activity"/>
    <property type="evidence" value="ECO:0007669"/>
    <property type="project" value="UniProtKB-KW"/>
</dbReference>
<dbReference type="InterPro" id="IPR031565">
    <property type="entry name" value="T-conotoxin"/>
</dbReference>
<dbReference type="Pfam" id="PF16981">
    <property type="entry name" value="Chi-conotoxin"/>
    <property type="match status" value="1"/>
</dbReference>
<evidence type="ECO:0000250" key="1"/>
<evidence type="ECO:0000255" key="2"/>
<evidence type="ECO:0000305" key="3"/>
<evidence type="ECO:0000305" key="4">
    <source>
    </source>
</evidence>
<evidence type="ECO:0000312" key="5">
    <source>
        <dbReference type="EMBL" id="AAG60399.1"/>
    </source>
</evidence>
<reference key="1">
    <citation type="journal article" date="2001" name="Mol. Biol. Evol.">
        <title>Mechanisms for evolving hypervariability: the case of conopeptides.</title>
        <authorList>
            <person name="Conticello S.G."/>
            <person name="Gilad Y."/>
            <person name="Avidan N."/>
            <person name="Ben-Asher E."/>
            <person name="Levy Z."/>
            <person name="Fainzilber M."/>
        </authorList>
    </citation>
    <scope>NUCLEOTIDE SEQUENCE [MRNA]</scope>
    <source>
        <tissue>Venom duct</tissue>
    </source>
</reference>
<proteinExistence type="inferred from homology"/>